<comment type="function">
    <text evidence="1">Involved in mRNA export coupled transcription activation by association with both the TREX-2 and the SAGA complexes. The transcription regulatory histone acetylation (HAT) complex SAGA is a multiprotein complex that activates transcription by remodeling chromatin and mediating histone acetylation and deubiquitination. Within the SAGA complex, participates in a subcomplex that specifically deubiquitinates histones. The SAGA complex is recruited to specific gene promoters by activators, where it is required for transcription. The TREX-2 complex functions in docking export-competent ribonucleoprotein particles (mRNPs) to the nuclear entrance of the nuclear pore complex (nuclear basket). TREX-2 participates in mRNA export and accurate chromatin positioning in the nucleus by tethering genes to the nuclear periphery (By similarity).</text>
</comment>
<comment type="subunit">
    <text evidence="1">Component of the nuclear pore complex (NPC)-associated TREX-2 complex (transcription and export complex 2). Component of the SAGA transcription coactivator-HAT complex. Within the SAGA complex, participates in a subcomplex of SAGA called the DUB module (deubiquitination module) (By similarity).</text>
</comment>
<comment type="subcellular location">
    <subcellularLocation>
        <location evidence="2">Nucleus</location>
        <location evidence="2">Nucleoplasm</location>
    </subcellularLocation>
</comment>
<comment type="similarity">
    <text evidence="2">Belongs to the ENY2 family.</text>
</comment>
<organism>
    <name type="scientific">Xenopus laevis</name>
    <name type="common">African clawed frog</name>
    <dbReference type="NCBI Taxonomy" id="8355"/>
    <lineage>
        <taxon>Eukaryota</taxon>
        <taxon>Metazoa</taxon>
        <taxon>Chordata</taxon>
        <taxon>Craniata</taxon>
        <taxon>Vertebrata</taxon>
        <taxon>Euteleostomi</taxon>
        <taxon>Amphibia</taxon>
        <taxon>Batrachia</taxon>
        <taxon>Anura</taxon>
        <taxon>Pipoidea</taxon>
        <taxon>Pipidae</taxon>
        <taxon>Xenopodinae</taxon>
        <taxon>Xenopus</taxon>
        <taxon>Xenopus</taxon>
    </lineage>
</organism>
<sequence>MNKDAQMKAVINQKLIETGERERLKELLRAKLIECGWRDQLKAHCKDVINEKGVEHVTVDDLVAEITPKGRALVPDSVKKELLQRIRAFLAQHASL</sequence>
<proteinExistence type="inferred from homology"/>
<dbReference type="EMBL" id="BC106564">
    <property type="protein sequence ID" value="AAI06565.1"/>
    <property type="molecule type" value="mRNA"/>
</dbReference>
<dbReference type="RefSeq" id="NP_001090119.1">
    <property type="nucleotide sequence ID" value="NM_001096650.1"/>
</dbReference>
<dbReference type="SMR" id="Q3KPT5"/>
<dbReference type="DNASU" id="735197"/>
<dbReference type="GeneID" id="735197"/>
<dbReference type="KEGG" id="xla:735197"/>
<dbReference type="AGR" id="Xenbase:XB-GENE-961814"/>
<dbReference type="CTD" id="735197"/>
<dbReference type="Xenbase" id="XB-GENE-961814">
    <property type="gene designation" value="eny2.L"/>
</dbReference>
<dbReference type="OMA" id="RLMCRNI"/>
<dbReference type="OrthoDB" id="6221744at2759"/>
<dbReference type="Proteomes" id="UP000186698">
    <property type="component" value="Chromosome 6L"/>
</dbReference>
<dbReference type="Bgee" id="735197">
    <property type="expression patterns" value="Expressed in egg cell and 19 other cell types or tissues"/>
</dbReference>
<dbReference type="GO" id="GO:0071819">
    <property type="term" value="C:DUBm complex"/>
    <property type="evidence" value="ECO:0000318"/>
    <property type="project" value="GO_Central"/>
</dbReference>
<dbReference type="GO" id="GO:0005643">
    <property type="term" value="C:nuclear pore"/>
    <property type="evidence" value="ECO:0007669"/>
    <property type="project" value="UniProtKB-UniRule"/>
</dbReference>
<dbReference type="GO" id="GO:0005654">
    <property type="term" value="C:nucleoplasm"/>
    <property type="evidence" value="ECO:0007669"/>
    <property type="project" value="UniProtKB-SubCell"/>
</dbReference>
<dbReference type="GO" id="GO:0000124">
    <property type="term" value="C:SAGA complex"/>
    <property type="evidence" value="ECO:0000250"/>
    <property type="project" value="UniProtKB"/>
</dbReference>
<dbReference type="GO" id="GO:0070390">
    <property type="term" value="C:transcription export complex 2"/>
    <property type="evidence" value="ECO:0007669"/>
    <property type="project" value="UniProtKB-UniRule"/>
</dbReference>
<dbReference type="GO" id="GO:0003682">
    <property type="term" value="F:chromatin binding"/>
    <property type="evidence" value="ECO:0000318"/>
    <property type="project" value="GO_Central"/>
</dbReference>
<dbReference type="GO" id="GO:0003713">
    <property type="term" value="F:transcription coactivator activity"/>
    <property type="evidence" value="ECO:0000250"/>
    <property type="project" value="UniProtKB"/>
</dbReference>
<dbReference type="GO" id="GO:0006325">
    <property type="term" value="P:chromatin organization"/>
    <property type="evidence" value="ECO:0007669"/>
    <property type="project" value="UniProtKB-KW"/>
</dbReference>
<dbReference type="GO" id="GO:0016973">
    <property type="term" value="P:poly(A)+ mRNA export from nucleus"/>
    <property type="evidence" value="ECO:0000318"/>
    <property type="project" value="GO_Central"/>
</dbReference>
<dbReference type="GO" id="GO:0045893">
    <property type="term" value="P:positive regulation of DNA-templated transcription"/>
    <property type="evidence" value="ECO:0000250"/>
    <property type="project" value="UniProtKB"/>
</dbReference>
<dbReference type="GO" id="GO:0015031">
    <property type="term" value="P:protein transport"/>
    <property type="evidence" value="ECO:0007669"/>
    <property type="project" value="UniProtKB-KW"/>
</dbReference>
<dbReference type="GO" id="GO:0006357">
    <property type="term" value="P:regulation of transcription by RNA polymerase II"/>
    <property type="evidence" value="ECO:0000318"/>
    <property type="project" value="GO_Central"/>
</dbReference>
<dbReference type="GO" id="GO:0006368">
    <property type="term" value="P:transcription elongation by RNA polymerase II"/>
    <property type="evidence" value="ECO:0007669"/>
    <property type="project" value="UniProtKB-UniRule"/>
</dbReference>
<dbReference type="FunFam" id="1.10.246.140:FF:000001">
    <property type="entry name" value="Transcription and mRNA export factor ENY2"/>
    <property type="match status" value="1"/>
</dbReference>
<dbReference type="Gene3D" id="1.10.246.140">
    <property type="match status" value="1"/>
</dbReference>
<dbReference type="HAMAP" id="MF_03046">
    <property type="entry name" value="ENY2_Sus1"/>
    <property type="match status" value="1"/>
</dbReference>
<dbReference type="InterPro" id="IPR018783">
    <property type="entry name" value="TF_ENY2"/>
</dbReference>
<dbReference type="InterPro" id="IPR038212">
    <property type="entry name" value="TF_EnY2_sf"/>
</dbReference>
<dbReference type="PANTHER" id="PTHR12514">
    <property type="entry name" value="ENHANCER OF YELLOW 2 TRANSCRIPTION FACTOR"/>
    <property type="match status" value="1"/>
</dbReference>
<dbReference type="Pfam" id="PF10163">
    <property type="entry name" value="EnY2"/>
    <property type="match status" value="1"/>
</dbReference>
<name>ENY2_XENLA</name>
<gene>
    <name type="primary">eny2</name>
</gene>
<keyword id="KW-0010">Activator</keyword>
<keyword id="KW-0156">Chromatin regulator</keyword>
<keyword id="KW-0509">mRNA transport</keyword>
<keyword id="KW-0539">Nucleus</keyword>
<keyword id="KW-0653">Protein transport</keyword>
<keyword id="KW-1185">Reference proteome</keyword>
<keyword id="KW-0804">Transcription</keyword>
<keyword id="KW-0805">Transcription regulation</keyword>
<keyword id="KW-0811">Translocation</keyword>
<keyword id="KW-0813">Transport</keyword>
<evidence type="ECO:0000250" key="1"/>
<evidence type="ECO:0000255" key="2">
    <source>
        <dbReference type="HAMAP-Rule" id="MF_03046"/>
    </source>
</evidence>
<protein>
    <recommendedName>
        <fullName evidence="2">Transcription and mRNA export factor ENY2</fullName>
    </recommendedName>
    <alternativeName>
        <fullName evidence="2">Enhancer of yellow 2 transcription factor homolog</fullName>
    </alternativeName>
</protein>
<reference key="1">
    <citation type="submission" date="2005-10" db="EMBL/GenBank/DDBJ databases">
        <authorList>
            <consortium name="NIH - Xenopus Gene Collection (XGC) project"/>
        </authorList>
    </citation>
    <scope>NUCLEOTIDE SEQUENCE [LARGE SCALE MRNA]</scope>
    <source>
        <tissue>Testis</tissue>
    </source>
</reference>
<accession>Q3KPT5</accession>
<feature type="chain" id="PRO_0000314133" description="Transcription and mRNA export factor ENY2">
    <location>
        <begin position="1"/>
        <end position="96"/>
    </location>
</feature>